<feature type="signal peptide" evidence="4 8">
    <location>
        <begin position="1"/>
        <end position="25"/>
    </location>
</feature>
<feature type="chain" id="PRO_0000017720" description="Oncostatin-M" evidence="10">
    <location>
        <begin position="26"/>
        <end position="221"/>
    </location>
</feature>
<feature type="propeptide" id="PRO_0000017721" evidence="10">
    <location>
        <begin position="222"/>
        <end position="252"/>
    </location>
</feature>
<feature type="region of interest" description="Disordered" evidence="3">
    <location>
        <begin position="162"/>
        <end position="184"/>
    </location>
</feature>
<feature type="region of interest" description="Disordered" evidence="3">
    <location>
        <begin position="213"/>
        <end position="252"/>
    </location>
</feature>
<feature type="compositionally biased region" description="Basic residues" evidence="3">
    <location>
        <begin position="218"/>
        <end position="245"/>
    </location>
</feature>
<feature type="glycosylation site" description="N-linked (GlcNAc...) asparagine" evidence="2">
    <location>
        <position position="100"/>
    </location>
</feature>
<feature type="glycosylation site" description="N-linked (GlcNAc...) asparagine" evidence="2">
    <location>
        <position position="217"/>
    </location>
</feature>
<feature type="disulfide bond" evidence="6">
    <location>
        <begin position="31"/>
        <end position="152"/>
    </location>
</feature>
<feature type="disulfide bond" evidence="6">
    <location>
        <begin position="74"/>
        <end position="192"/>
    </location>
</feature>
<feature type="sequence variant" id="VAR_049782" description="In dbSNP:rs5763919.">
    <original>T</original>
    <variation>M</variation>
    <location>
        <position position="9"/>
    </location>
</feature>
<feature type="mutagenesis site" description="Inactive.">
    <original>C</original>
    <variation>S</variation>
    <location>
        <position position="74"/>
    </location>
</feature>
<feature type="mutagenesis site" description="Inactive.">
    <original>C</original>
    <variation>S</variation>
    <location>
        <position position="192"/>
    </location>
</feature>
<feature type="mutagenesis site" description="Inactive.">
    <original>F</original>
    <variation>G</variation>
    <location>
        <position position="201"/>
    </location>
</feature>
<feature type="mutagenesis site" description="Inactive.">
    <original>F</original>
    <variation>G</variation>
    <location>
        <position position="209"/>
    </location>
</feature>
<feature type="mutagenesis site" description="Inhibits propeptide cleavage." evidence="7">
    <original>R</original>
    <variation>G</variation>
    <location>
        <position position="220"/>
    </location>
</feature>
<feature type="mutagenesis site" description="Inhibits propeptide cleavage." evidence="7">
    <original>R</original>
    <variation>G</variation>
    <location>
        <position position="221"/>
    </location>
</feature>
<feature type="helix" evidence="11">
    <location>
        <begin position="35"/>
        <end position="49"/>
    </location>
</feature>
<feature type="helix" evidence="11">
    <location>
        <begin position="52"/>
        <end position="54"/>
    </location>
</feature>
<feature type="helix" evidence="11">
    <location>
        <begin position="56"/>
        <end position="62"/>
    </location>
</feature>
<feature type="helix" evidence="11">
    <location>
        <begin position="68"/>
        <end position="71"/>
    </location>
</feature>
<feature type="turn" evidence="11">
    <location>
        <begin position="78"/>
        <end position="80"/>
    </location>
</feature>
<feature type="helix" evidence="11">
    <location>
        <begin position="84"/>
        <end position="89"/>
    </location>
</feature>
<feature type="helix" evidence="11">
    <location>
        <begin position="92"/>
        <end position="115"/>
    </location>
</feature>
<feature type="helix" evidence="11">
    <location>
        <begin position="120"/>
        <end position="122"/>
    </location>
</feature>
<feature type="helix" evidence="11">
    <location>
        <begin position="123"/>
        <end position="126"/>
    </location>
</feature>
<feature type="helix" evidence="11">
    <location>
        <begin position="130"/>
        <end position="156"/>
    </location>
</feature>
<feature type="helix" evidence="11">
    <location>
        <begin position="184"/>
        <end position="210"/>
    </location>
</feature>
<proteinExistence type="evidence at protein level"/>
<organism>
    <name type="scientific">Homo sapiens</name>
    <name type="common">Human</name>
    <dbReference type="NCBI Taxonomy" id="9606"/>
    <lineage>
        <taxon>Eukaryota</taxon>
        <taxon>Metazoa</taxon>
        <taxon>Chordata</taxon>
        <taxon>Craniata</taxon>
        <taxon>Vertebrata</taxon>
        <taxon>Euteleostomi</taxon>
        <taxon>Mammalia</taxon>
        <taxon>Eutheria</taxon>
        <taxon>Euarchontoglires</taxon>
        <taxon>Primates</taxon>
        <taxon>Haplorrhini</taxon>
        <taxon>Catarrhini</taxon>
        <taxon>Hominidae</taxon>
        <taxon>Homo</taxon>
    </lineage>
</organism>
<gene>
    <name type="primary">OSM</name>
</gene>
<protein>
    <recommendedName>
        <fullName>Oncostatin-M</fullName>
        <shortName>OSM</shortName>
    </recommendedName>
</protein>
<evidence type="ECO:0000250" key="1"/>
<evidence type="ECO:0000255" key="2"/>
<evidence type="ECO:0000256" key="3">
    <source>
        <dbReference type="SAM" id="MobiDB-lite"/>
    </source>
</evidence>
<evidence type="ECO:0000269" key="4">
    <source>
    </source>
</evidence>
<evidence type="ECO:0000269" key="5">
    <source>
    </source>
</evidence>
<evidence type="ECO:0000269" key="6">
    <source>
    </source>
</evidence>
<evidence type="ECO:0000269" key="7">
    <source>
    </source>
</evidence>
<evidence type="ECO:0000269" key="8">
    <source>
    </source>
</evidence>
<evidence type="ECO:0000305" key="9"/>
<evidence type="ECO:0000305" key="10">
    <source>
    </source>
</evidence>
<evidence type="ECO:0007829" key="11">
    <source>
        <dbReference type="PDB" id="1EVS"/>
    </source>
</evidence>
<sequence length="252" mass="28484">MGVLLTQRTLLSLVLALLFPSMASMAAIGSCSKEYRVLLGQLQKQTDLMQDTSRLLDPYIRIQGLDVPKLREHCRERPGAFPSEETLRGLGRRGFLQTLNATLGCVLHRLADLEQRLPKAQDLERSGLNIEDLEKLQMARPNILGLRNNIYCMAQLLDNSDTAEPTKAGRGASQPPTPTPASDAFQRKLEGCRFLHGYHRFMHSVGRVFSKWGESPNRSRRHSPHQALRKGVRRTRPSRKGKRLMTRGQLPR</sequence>
<accession>P13725</accession>
<accession>Q6FHP8</accession>
<accession>Q9UCP6</accession>
<name>ONCM_HUMAN</name>
<reference key="1">
    <citation type="journal article" date="1989" name="Mol. Cell. Biol.">
        <title>Molecular cloning, sequence analysis, and functional expression of a novel growth regulator, oncostatin M.</title>
        <authorList>
            <person name="Malik N."/>
            <person name="Kallestad J.C."/>
            <person name="Gunderson N.L."/>
            <person name="Austin S.D."/>
            <person name="Neubauer M.G."/>
            <person name="Ochs V."/>
            <person name="Marquardt H."/>
            <person name="Zarling J.M."/>
            <person name="Shoyab M."/>
            <person name="Wei C.M."/>
            <person name="Linsley P.S."/>
            <person name="Rose T.M."/>
        </authorList>
    </citation>
    <scope>NUCLEOTIDE SEQUENCE [GENOMIC DNA]</scope>
</reference>
<reference key="2">
    <citation type="journal article" date="2004" name="Genome Biol.">
        <title>A genome annotation-driven approach to cloning the human ORFeome.</title>
        <authorList>
            <person name="Collins J.E."/>
            <person name="Wright C.L."/>
            <person name="Edwards C.A."/>
            <person name="Davis M.P."/>
            <person name="Grinham J.A."/>
            <person name="Cole C.G."/>
            <person name="Goward M.E."/>
            <person name="Aguado B."/>
            <person name="Mallya M."/>
            <person name="Mokrab Y."/>
            <person name="Huckle E.J."/>
            <person name="Beare D.M."/>
            <person name="Dunham I."/>
        </authorList>
    </citation>
    <scope>NUCLEOTIDE SEQUENCE [LARGE SCALE MRNA]</scope>
</reference>
<reference key="3">
    <citation type="submission" date="2004-06" db="EMBL/GenBank/DDBJ databases">
        <title>Cloning of human full open reading frames in Gateway(TM) system entry vector (pDONR201).</title>
        <authorList>
            <person name="Halleck A."/>
            <person name="Ebert L."/>
            <person name="Mkoundinya M."/>
            <person name="Schick M."/>
            <person name="Eisenstein S."/>
            <person name="Neubert P."/>
            <person name="Kstrang K."/>
            <person name="Schatten R."/>
            <person name="Shen B."/>
            <person name="Henze S."/>
            <person name="Mar W."/>
            <person name="Korn B."/>
            <person name="Zuo D."/>
            <person name="Hu Y."/>
            <person name="LaBaer J."/>
        </authorList>
    </citation>
    <scope>NUCLEOTIDE SEQUENCE [LARGE SCALE MRNA]</scope>
</reference>
<reference key="4">
    <citation type="journal article" date="1999" name="Nature">
        <title>The DNA sequence of human chromosome 22.</title>
        <authorList>
            <person name="Dunham I."/>
            <person name="Hunt A.R."/>
            <person name="Collins J.E."/>
            <person name="Bruskiewich R."/>
            <person name="Beare D.M."/>
            <person name="Clamp M."/>
            <person name="Smink L.J."/>
            <person name="Ainscough R."/>
            <person name="Almeida J.P."/>
            <person name="Babbage A.K."/>
            <person name="Bagguley C."/>
            <person name="Bailey J."/>
            <person name="Barlow K.F."/>
            <person name="Bates K.N."/>
            <person name="Beasley O.P."/>
            <person name="Bird C.P."/>
            <person name="Blakey S.E."/>
            <person name="Bridgeman A.M."/>
            <person name="Buck D."/>
            <person name="Burgess J."/>
            <person name="Burrill W.D."/>
            <person name="Burton J."/>
            <person name="Carder C."/>
            <person name="Carter N.P."/>
            <person name="Chen Y."/>
            <person name="Clark G."/>
            <person name="Clegg S.M."/>
            <person name="Cobley V.E."/>
            <person name="Cole C.G."/>
            <person name="Collier R.E."/>
            <person name="Connor R."/>
            <person name="Conroy D."/>
            <person name="Corby N.R."/>
            <person name="Coville G.J."/>
            <person name="Cox A.V."/>
            <person name="Davis J."/>
            <person name="Dawson E."/>
            <person name="Dhami P.D."/>
            <person name="Dockree C."/>
            <person name="Dodsworth S.J."/>
            <person name="Durbin R.M."/>
            <person name="Ellington A.G."/>
            <person name="Evans K.L."/>
            <person name="Fey J.M."/>
            <person name="Fleming K."/>
            <person name="French L."/>
            <person name="Garner A.A."/>
            <person name="Gilbert J.G.R."/>
            <person name="Goward M.E."/>
            <person name="Grafham D.V."/>
            <person name="Griffiths M.N.D."/>
            <person name="Hall C."/>
            <person name="Hall R.E."/>
            <person name="Hall-Tamlyn G."/>
            <person name="Heathcott R.W."/>
            <person name="Ho S."/>
            <person name="Holmes S."/>
            <person name="Hunt S.E."/>
            <person name="Jones M.C."/>
            <person name="Kershaw J."/>
            <person name="Kimberley A.M."/>
            <person name="King A."/>
            <person name="Laird G.K."/>
            <person name="Langford C.F."/>
            <person name="Leversha M.A."/>
            <person name="Lloyd C."/>
            <person name="Lloyd D.M."/>
            <person name="Martyn I.D."/>
            <person name="Mashreghi-Mohammadi M."/>
            <person name="Matthews L.H."/>
            <person name="Mccann O.T."/>
            <person name="Mcclay J."/>
            <person name="Mclaren S."/>
            <person name="McMurray A.A."/>
            <person name="Milne S.A."/>
            <person name="Mortimore B.J."/>
            <person name="Odell C.N."/>
            <person name="Pavitt R."/>
            <person name="Pearce A.V."/>
            <person name="Pearson D."/>
            <person name="Phillimore B.J.C.T."/>
            <person name="Phillips S.H."/>
            <person name="Plumb R.W."/>
            <person name="Ramsay H."/>
            <person name="Ramsey Y."/>
            <person name="Rogers L."/>
            <person name="Ross M.T."/>
            <person name="Scott C.E."/>
            <person name="Sehra H.K."/>
            <person name="Skuce C.D."/>
            <person name="Smalley S."/>
            <person name="Smith M.L."/>
            <person name="Soderlund C."/>
            <person name="Spragon L."/>
            <person name="Steward C.A."/>
            <person name="Sulston J.E."/>
            <person name="Swann R.M."/>
            <person name="Vaudin M."/>
            <person name="Wall M."/>
            <person name="Wallis J.M."/>
            <person name="Whiteley M.N."/>
            <person name="Willey D.L."/>
            <person name="Williams L."/>
            <person name="Williams S.A."/>
            <person name="Williamson H."/>
            <person name="Wilmer T.E."/>
            <person name="Wilming L."/>
            <person name="Wright C.L."/>
            <person name="Hubbard T."/>
            <person name="Bentley D.R."/>
            <person name="Beck S."/>
            <person name="Rogers J."/>
            <person name="Shimizu N."/>
            <person name="Minoshima S."/>
            <person name="Kawasaki K."/>
            <person name="Sasaki T."/>
            <person name="Asakawa S."/>
            <person name="Kudoh J."/>
            <person name="Shintani A."/>
            <person name="Shibuya K."/>
            <person name="Yoshizaki Y."/>
            <person name="Aoki N."/>
            <person name="Mitsuyama S."/>
            <person name="Roe B.A."/>
            <person name="Chen F."/>
            <person name="Chu L."/>
            <person name="Crabtree J."/>
            <person name="Deschamps S."/>
            <person name="Do A."/>
            <person name="Do T."/>
            <person name="Dorman A."/>
            <person name="Fang F."/>
            <person name="Fu Y."/>
            <person name="Hu P."/>
            <person name="Hua A."/>
            <person name="Kenton S."/>
            <person name="Lai H."/>
            <person name="Lao H.I."/>
            <person name="Lewis J."/>
            <person name="Lewis S."/>
            <person name="Lin S.-P."/>
            <person name="Loh P."/>
            <person name="Malaj E."/>
            <person name="Nguyen T."/>
            <person name="Pan H."/>
            <person name="Phan S."/>
            <person name="Qi S."/>
            <person name="Qian Y."/>
            <person name="Ray L."/>
            <person name="Ren Q."/>
            <person name="Shaull S."/>
            <person name="Sloan D."/>
            <person name="Song L."/>
            <person name="Wang Q."/>
            <person name="Wang Y."/>
            <person name="Wang Z."/>
            <person name="White J."/>
            <person name="Willingham D."/>
            <person name="Wu H."/>
            <person name="Yao Z."/>
            <person name="Zhan M."/>
            <person name="Zhang G."/>
            <person name="Chissoe S."/>
            <person name="Murray J."/>
            <person name="Miller N."/>
            <person name="Minx P."/>
            <person name="Fulton R."/>
            <person name="Johnson D."/>
            <person name="Bemis G."/>
            <person name="Bentley D."/>
            <person name="Bradshaw H."/>
            <person name="Bourne S."/>
            <person name="Cordes M."/>
            <person name="Du Z."/>
            <person name="Fulton L."/>
            <person name="Goela D."/>
            <person name="Graves T."/>
            <person name="Hawkins J."/>
            <person name="Hinds K."/>
            <person name="Kemp K."/>
            <person name="Latreille P."/>
            <person name="Layman D."/>
            <person name="Ozersky P."/>
            <person name="Rohlfing T."/>
            <person name="Scheet P."/>
            <person name="Walker C."/>
            <person name="Wamsley A."/>
            <person name="Wohldmann P."/>
            <person name="Pepin K."/>
            <person name="Nelson J."/>
            <person name="Korf I."/>
            <person name="Bedell J.A."/>
            <person name="Hillier L.W."/>
            <person name="Mardis E."/>
            <person name="Waterston R."/>
            <person name="Wilson R."/>
            <person name="Emanuel B.S."/>
            <person name="Shaikh T."/>
            <person name="Kurahashi H."/>
            <person name="Saitta S."/>
            <person name="Budarf M.L."/>
            <person name="McDermid H.E."/>
            <person name="Johnson A."/>
            <person name="Wong A.C.C."/>
            <person name="Morrow B.E."/>
            <person name="Edelmann L."/>
            <person name="Kim U.J."/>
            <person name="Shizuya H."/>
            <person name="Simon M.I."/>
            <person name="Dumanski J.P."/>
            <person name="Peyrard M."/>
            <person name="Kedra D."/>
            <person name="Seroussi E."/>
            <person name="Fransson I."/>
            <person name="Tapia I."/>
            <person name="Bruder C.E."/>
            <person name="O'Brien K.P."/>
            <person name="Wilkinson P."/>
            <person name="Bodenteich A."/>
            <person name="Hartman K."/>
            <person name="Hu X."/>
            <person name="Khan A.S."/>
            <person name="Lane L."/>
            <person name="Tilahun Y."/>
            <person name="Wright H."/>
        </authorList>
    </citation>
    <scope>NUCLEOTIDE SEQUENCE [LARGE SCALE GENOMIC DNA]</scope>
</reference>
<reference key="5">
    <citation type="submission" date="2005-07" db="EMBL/GenBank/DDBJ databases">
        <authorList>
            <person name="Mural R.J."/>
            <person name="Istrail S."/>
            <person name="Sutton G.G."/>
            <person name="Florea L."/>
            <person name="Halpern A.L."/>
            <person name="Mobarry C.M."/>
            <person name="Lippert R."/>
            <person name="Walenz B."/>
            <person name="Shatkay H."/>
            <person name="Dew I."/>
            <person name="Miller J.R."/>
            <person name="Flanigan M.J."/>
            <person name="Edwards N.J."/>
            <person name="Bolanos R."/>
            <person name="Fasulo D."/>
            <person name="Halldorsson B.V."/>
            <person name="Hannenhalli S."/>
            <person name="Turner R."/>
            <person name="Yooseph S."/>
            <person name="Lu F."/>
            <person name="Nusskern D.R."/>
            <person name="Shue B.C."/>
            <person name="Zheng X.H."/>
            <person name="Zhong F."/>
            <person name="Delcher A.L."/>
            <person name="Huson D.H."/>
            <person name="Kravitz S.A."/>
            <person name="Mouchard L."/>
            <person name="Reinert K."/>
            <person name="Remington K.A."/>
            <person name="Clark A.G."/>
            <person name="Waterman M.S."/>
            <person name="Eichler E.E."/>
            <person name="Adams M.D."/>
            <person name="Hunkapiller M.W."/>
            <person name="Myers E.W."/>
            <person name="Venter J.C."/>
        </authorList>
    </citation>
    <scope>NUCLEOTIDE SEQUENCE [LARGE SCALE GENOMIC DNA]</scope>
</reference>
<reference key="6">
    <citation type="journal article" date="2004" name="Genome Res.">
        <title>The status, quality, and expansion of the NIH full-length cDNA project: the Mammalian Gene Collection (MGC).</title>
        <authorList>
            <consortium name="The MGC Project Team"/>
        </authorList>
    </citation>
    <scope>NUCLEOTIDE SEQUENCE [LARGE SCALE MRNA]</scope>
    <source>
        <tissue>Lung</tissue>
    </source>
</reference>
<reference key="7">
    <citation type="journal article" date="1986" name="Proc. Natl. Acad. Sci. U.S.A.">
        <title>Oncostatin M: a growth regulator produced by differentiated histiocytic lymphoma cells.</title>
        <authorList>
            <person name="Zarling J.M."/>
            <person name="Shoyab M."/>
            <person name="Marquardt H."/>
            <person name="Hanson M.B."/>
            <person name="Lioubin M.N."/>
            <person name="Todaro G.J."/>
        </authorList>
    </citation>
    <scope>PROTEIN SEQUENCE OF 26-51</scope>
</reference>
<reference key="8">
    <citation type="journal article" date="1992" name="Science">
        <title>Identification of a major growth factor for AIDS-Kaposi's sarcoma cells as oncostatin M.</title>
        <authorList>
            <person name="Nair B.C."/>
            <person name="DeVico A.L."/>
            <person name="Nakamura S."/>
            <person name="Copeland T.D."/>
            <person name="Chen Y."/>
            <person name="Patel A."/>
            <person name="O'Neil T."/>
            <person name="Oroszlan S."/>
            <person name="Gallo R.C."/>
            <person name="Sarngadharan M.G."/>
        </authorList>
    </citation>
    <scope>PROTEIN SEQUENCE OF 26-45</scope>
    <scope>FUNCTION</scope>
    <source>
        <tissue>T-cell</tissue>
    </source>
</reference>
<reference key="9">
    <citation type="journal article" date="1990" name="Mol. Cell. Biol.">
        <title>Cleavage of a hydrophilic C-terminal domain increases growth-inhibitory activity of oncostatin M.</title>
        <authorList>
            <person name="Linsley P.S."/>
            <person name="Kallestad J."/>
            <person name="Ochs V."/>
            <person name="Neubauer M."/>
        </authorList>
    </citation>
    <scope>PROTEOLYTIC PROCESSING</scope>
    <scope>MUTAGENESIS OF ARG-220 AND ARG-221</scope>
</reference>
<reference key="10">
    <citation type="journal article" date="1991" name="J. Biol. Chem.">
        <title>Disulfide bond assignment and identification of regions required for functional activity of oncostatin M.</title>
        <authorList>
            <person name="Kallestad J.C."/>
            <person name="Shoyab M."/>
            <person name="Linsley P.S."/>
        </authorList>
    </citation>
    <scope>DISULFIDE BONDS</scope>
</reference>
<reference key="11">
    <citation type="journal article" date="1991" name="Proc. Natl. Acad. Sci. U.S.A.">
        <title>Oncostatin M is a member of a cytokine family that includes leukemia-inhibitory factor, granulocyte colony-stimulating factor, and interleukin 6.</title>
        <authorList>
            <person name="Rose T.M."/>
            <person name="Bruce A.G."/>
        </authorList>
    </citation>
    <scope>INHIBITION OF M1 MYELOID LEUKEMIC CELLS</scope>
</reference>
<reference key="12">
    <citation type="journal article" date="1992" name="Science">
        <title>Oncostatin M as a potent mitogen for AIDS-Kaposi's sarcoma-derived cells.</title>
        <authorList>
            <person name="Miles S.A."/>
            <person name="Martinez-Maza O."/>
            <person name="Rezai A."/>
            <person name="Magpantay L."/>
            <person name="Kishimoto T."/>
            <person name="Nakamura S."/>
            <person name="Radka S.F."/>
            <person name="Linsley P.S."/>
        </authorList>
    </citation>
    <scope>FUNCTION</scope>
</reference>
<reference key="13">
    <citation type="journal article" date="1996" name="J. Biol. Chem.">
        <title>Dual oncostatin M (OSM) receptors. Cloning and characterization of an alternative signaling subunit conferring OSM-specific receptor activation.</title>
        <authorList>
            <person name="Mosley B."/>
            <person name="De Imus C."/>
            <person name="Friend D."/>
            <person name="Boiani N."/>
            <person name="Thoma B."/>
            <person name="Park L.S."/>
            <person name="Cosman D."/>
        </authorList>
    </citation>
    <scope>INTERACTION WITH OSMR AND IL6ST</scope>
</reference>
<reference key="14">
    <citation type="journal article" date="2000" name="Structure">
        <title>Crystal structure and functional dissection of the cytostatic cytokine oncostatin M.</title>
        <authorList>
            <person name="Deller M.C."/>
            <person name="Hudson K.R."/>
            <person name="Ikemizu S."/>
            <person name="Bravo J."/>
            <person name="Jones E.Y."/>
            <person name="Heath J.K."/>
        </authorList>
    </citation>
    <scope>X-RAY CRYSTALLOGRAPHY (2.2 ANGSTROMS) OF 26-212</scope>
</reference>
<comment type="function">
    <text evidence="1 4 5">Growth regulator. Inhibits the proliferation of a number of tumor cell lines. Stimulates proliferation of AIDS-KS cells. It regulates cytokine production, including IL-6, G-CSF and GM-CSF from endothelial cells. Uses both type I OSM receptor (heterodimers composed of LIFR and IL6ST) and type II OSM receptor (heterodimers composed of OSMR and IL6ST). Involved in the maturation of fetal hepatocytes, thereby promoting liver development and regeneration (By similarity).</text>
</comment>
<comment type="interaction">
    <interactant intactId="EBI-6595724">
        <id>P13725</id>
    </interactant>
    <interactant intactId="EBI-1030834">
        <id>P40189</id>
        <label>IL6ST</label>
    </interactant>
    <organismsDiffer>false</organismsDiffer>
    <experiments>4</experiments>
</comment>
<comment type="subcellular location">
    <subcellularLocation>
        <location>Secreted</location>
    </subcellularLocation>
</comment>
<comment type="PTM">
    <text evidence="7">Propeptide processing is not important for receptor binding activity but may be important growth-inhibitory activity.</text>
</comment>
<comment type="similarity">
    <text evidence="9">Belongs to the LIF/OSM family.</text>
</comment>
<keyword id="KW-0002">3D-structure</keyword>
<keyword id="KW-0165">Cleavage on pair of basic residues</keyword>
<keyword id="KW-0202">Cytokine</keyword>
<keyword id="KW-0903">Direct protein sequencing</keyword>
<keyword id="KW-1015">Disulfide bond</keyword>
<keyword id="KW-0325">Glycoprotein</keyword>
<keyword id="KW-0341">Growth regulation</keyword>
<keyword id="KW-0497">Mitogen</keyword>
<keyword id="KW-1267">Proteomics identification</keyword>
<keyword id="KW-1185">Reference proteome</keyword>
<keyword id="KW-0964">Secreted</keyword>
<keyword id="KW-0732">Signal</keyword>
<dbReference type="EMBL" id="M27288">
    <property type="protein sequence ID" value="AAA36388.1"/>
    <property type="molecule type" value="Genomic_DNA"/>
</dbReference>
<dbReference type="EMBL" id="M27286">
    <property type="protein sequence ID" value="AAA36388.1"/>
    <property type="status" value="JOINED"/>
    <property type="molecule type" value="Genomic_DNA"/>
</dbReference>
<dbReference type="EMBL" id="M27287">
    <property type="protein sequence ID" value="AAA36388.1"/>
    <property type="status" value="JOINED"/>
    <property type="molecule type" value="Genomic_DNA"/>
</dbReference>
<dbReference type="EMBL" id="CR456534">
    <property type="protein sequence ID" value="CAG30420.1"/>
    <property type="molecule type" value="mRNA"/>
</dbReference>
<dbReference type="EMBL" id="CR541703">
    <property type="protein sequence ID" value="CAG46504.1"/>
    <property type="molecule type" value="mRNA"/>
</dbReference>
<dbReference type="EMBL" id="AC004264">
    <property type="protein sequence ID" value="AAC05173.1"/>
    <property type="molecule type" value="Genomic_DNA"/>
</dbReference>
<dbReference type="EMBL" id="CH471095">
    <property type="protein sequence ID" value="EAW59864.1"/>
    <property type="molecule type" value="Genomic_DNA"/>
</dbReference>
<dbReference type="EMBL" id="BC011589">
    <property type="protein sequence ID" value="AAH11589.1"/>
    <property type="molecule type" value="mRNA"/>
</dbReference>
<dbReference type="CCDS" id="CCDS13873.1"/>
<dbReference type="PIR" id="A32489">
    <property type="entry name" value="A32489"/>
</dbReference>
<dbReference type="RefSeq" id="NP_001306037.1">
    <property type="nucleotide sequence ID" value="NM_001319108.1"/>
</dbReference>
<dbReference type="RefSeq" id="NP_065391.1">
    <property type="nucleotide sequence ID" value="NM_020530.6"/>
</dbReference>
<dbReference type="PDB" id="1EVS">
    <property type="method" value="X-ray"/>
    <property type="resolution" value="2.20 A"/>
    <property type="chains" value="A=26-212"/>
</dbReference>
<dbReference type="PDB" id="8V29">
    <property type="method" value="EM"/>
    <property type="resolution" value="3.99 A"/>
    <property type="chains" value="A=26-221"/>
</dbReference>
<dbReference type="PDB" id="8V2A">
    <property type="method" value="EM"/>
    <property type="resolution" value="3.59 A"/>
    <property type="chains" value="A=26-221"/>
</dbReference>
<dbReference type="PDBsum" id="1EVS"/>
<dbReference type="PDBsum" id="8V29"/>
<dbReference type="PDBsum" id="8V2A"/>
<dbReference type="BMRB" id="P13725"/>
<dbReference type="EMDB" id="EMD-42902"/>
<dbReference type="EMDB" id="EMD-42903"/>
<dbReference type="SMR" id="P13725"/>
<dbReference type="BioGRID" id="111049">
    <property type="interactions" value="14"/>
</dbReference>
<dbReference type="DIP" id="DIP-5785N"/>
<dbReference type="FunCoup" id="P13725">
    <property type="interactions" value="741"/>
</dbReference>
<dbReference type="IntAct" id="P13725">
    <property type="interactions" value="11"/>
</dbReference>
<dbReference type="MINT" id="P13725"/>
<dbReference type="STRING" id="9606.ENSP00000215781"/>
<dbReference type="GlyCosmos" id="P13725">
    <property type="glycosylation" value="2 sites, No reported glycans"/>
</dbReference>
<dbReference type="GlyGen" id="P13725">
    <property type="glycosylation" value="4 sites, 1 O-linked glycan (1 site)"/>
</dbReference>
<dbReference type="iPTMnet" id="P13725"/>
<dbReference type="PhosphoSitePlus" id="P13725"/>
<dbReference type="BioMuta" id="OSM"/>
<dbReference type="DMDM" id="129168"/>
<dbReference type="MassIVE" id="P13725"/>
<dbReference type="PaxDb" id="9606-ENSP00000215781"/>
<dbReference type="PeptideAtlas" id="P13725"/>
<dbReference type="ProteomicsDB" id="52975"/>
<dbReference type="Antibodypedia" id="10652">
    <property type="antibodies" value="647 antibodies from 37 providers"/>
</dbReference>
<dbReference type="DNASU" id="5008"/>
<dbReference type="Ensembl" id="ENST00000215781.3">
    <property type="protein sequence ID" value="ENSP00000215781.2"/>
    <property type="gene ID" value="ENSG00000099985.4"/>
</dbReference>
<dbReference type="GeneID" id="5008"/>
<dbReference type="KEGG" id="hsa:5008"/>
<dbReference type="MANE-Select" id="ENST00000215781.3">
    <property type="protein sequence ID" value="ENSP00000215781.2"/>
    <property type="RefSeq nucleotide sequence ID" value="NM_020530.6"/>
    <property type="RefSeq protein sequence ID" value="NP_065391.1"/>
</dbReference>
<dbReference type="UCSC" id="uc003ahb.4">
    <property type="organism name" value="human"/>
</dbReference>
<dbReference type="AGR" id="HGNC:8506"/>
<dbReference type="CTD" id="5008"/>
<dbReference type="DisGeNET" id="5008"/>
<dbReference type="GeneCards" id="OSM"/>
<dbReference type="HGNC" id="HGNC:8506">
    <property type="gene designation" value="OSM"/>
</dbReference>
<dbReference type="HPA" id="ENSG00000099985">
    <property type="expression patterns" value="Tissue enriched (bone)"/>
</dbReference>
<dbReference type="MIM" id="165095">
    <property type="type" value="gene"/>
</dbReference>
<dbReference type="neXtProt" id="NX_P13725"/>
<dbReference type="OpenTargets" id="ENSG00000099985"/>
<dbReference type="PharmGKB" id="PA32836"/>
<dbReference type="VEuPathDB" id="HostDB:ENSG00000099985"/>
<dbReference type="eggNOG" id="ENOG502RVJA">
    <property type="taxonomic scope" value="Eukaryota"/>
</dbReference>
<dbReference type="GeneTree" id="ENSGT00390000004850"/>
<dbReference type="HOGENOM" id="CLU_102028_0_0_1"/>
<dbReference type="InParanoid" id="P13725"/>
<dbReference type="OMA" id="FMHSVGQ"/>
<dbReference type="OrthoDB" id="9837363at2759"/>
<dbReference type="PAN-GO" id="P13725">
    <property type="GO annotations" value="1 GO annotation based on evolutionary models"/>
</dbReference>
<dbReference type="PhylomeDB" id="P13725"/>
<dbReference type="TreeFam" id="TF338204"/>
<dbReference type="PathwayCommons" id="P13725"/>
<dbReference type="Reactome" id="R-HSA-6785807">
    <property type="pathway name" value="Interleukin-4 and Interleukin-13 signaling"/>
</dbReference>
<dbReference type="Reactome" id="R-HSA-6788467">
    <property type="pathway name" value="IL-6-type cytokine receptor ligand interactions"/>
</dbReference>
<dbReference type="SignaLink" id="P13725"/>
<dbReference type="SIGNOR" id="P13725"/>
<dbReference type="BioGRID-ORCS" id="5008">
    <property type="hits" value="11 hits in 1145 CRISPR screens"/>
</dbReference>
<dbReference type="EvolutionaryTrace" id="P13725"/>
<dbReference type="GeneWiki" id="Oncostatin_M"/>
<dbReference type="GenomeRNAi" id="5008"/>
<dbReference type="Pharos" id="P13725">
    <property type="development level" value="Tbio"/>
</dbReference>
<dbReference type="PRO" id="PR:P13725"/>
<dbReference type="Proteomes" id="UP000005640">
    <property type="component" value="Chromosome 22"/>
</dbReference>
<dbReference type="RNAct" id="P13725">
    <property type="molecule type" value="protein"/>
</dbReference>
<dbReference type="Bgee" id="ENSG00000099985">
    <property type="expression patterns" value="Expressed in bone marrow cell and 115 other cell types or tissues"/>
</dbReference>
<dbReference type="ExpressionAtlas" id="P13725">
    <property type="expression patterns" value="baseline and differential"/>
</dbReference>
<dbReference type="GO" id="GO:0005576">
    <property type="term" value="C:extracellular region"/>
    <property type="evidence" value="ECO:0000304"/>
    <property type="project" value="Reactome"/>
</dbReference>
<dbReference type="GO" id="GO:0005615">
    <property type="term" value="C:extracellular space"/>
    <property type="evidence" value="ECO:0000304"/>
    <property type="project" value="ProtInc"/>
</dbReference>
<dbReference type="GO" id="GO:0005125">
    <property type="term" value="F:cytokine activity"/>
    <property type="evidence" value="ECO:0000314"/>
    <property type="project" value="BHF-UCL"/>
</dbReference>
<dbReference type="GO" id="GO:0008083">
    <property type="term" value="F:growth factor activity"/>
    <property type="evidence" value="ECO:0000314"/>
    <property type="project" value="BHF-UCL"/>
</dbReference>
<dbReference type="GO" id="GO:0005147">
    <property type="term" value="F:oncostatin-M receptor binding"/>
    <property type="evidence" value="ECO:0000353"/>
    <property type="project" value="BHF-UCL"/>
</dbReference>
<dbReference type="GO" id="GO:0006955">
    <property type="term" value="P:immune response"/>
    <property type="evidence" value="ECO:0007669"/>
    <property type="project" value="InterPro"/>
</dbReference>
<dbReference type="GO" id="GO:0008285">
    <property type="term" value="P:negative regulation of cell population proliferation"/>
    <property type="evidence" value="ECO:0000304"/>
    <property type="project" value="ProtInc"/>
</dbReference>
<dbReference type="GO" id="GO:0046888">
    <property type="term" value="P:negative regulation of hormone secretion"/>
    <property type="evidence" value="ECO:0000314"/>
    <property type="project" value="MGI"/>
</dbReference>
<dbReference type="GO" id="GO:0038165">
    <property type="term" value="P:oncostatin-M-mediated signaling pathway"/>
    <property type="evidence" value="ECO:0000314"/>
    <property type="project" value="BHF-UCL"/>
</dbReference>
<dbReference type="GO" id="GO:0002675">
    <property type="term" value="P:positive regulation of acute inflammatory response"/>
    <property type="evidence" value="ECO:0000305"/>
    <property type="project" value="BHF-UCL"/>
</dbReference>
<dbReference type="GO" id="GO:0051781">
    <property type="term" value="P:positive regulation of cell division"/>
    <property type="evidence" value="ECO:0007669"/>
    <property type="project" value="UniProtKB-KW"/>
</dbReference>
<dbReference type="GO" id="GO:0008284">
    <property type="term" value="P:positive regulation of cell population proliferation"/>
    <property type="evidence" value="ECO:0000314"/>
    <property type="project" value="BHF-UCL"/>
</dbReference>
<dbReference type="GO" id="GO:0050729">
    <property type="term" value="P:positive regulation of inflammatory response"/>
    <property type="evidence" value="ECO:0000314"/>
    <property type="project" value="BHF-UCL"/>
</dbReference>
<dbReference type="GO" id="GO:0032740">
    <property type="term" value="P:positive regulation of interleukin-17 production"/>
    <property type="evidence" value="ECO:0000314"/>
    <property type="project" value="BHF-UCL"/>
</dbReference>
<dbReference type="GO" id="GO:0043410">
    <property type="term" value="P:positive regulation of MAPK cascade"/>
    <property type="evidence" value="ECO:0000314"/>
    <property type="project" value="MGI"/>
</dbReference>
<dbReference type="GO" id="GO:0033138">
    <property type="term" value="P:positive regulation of peptidyl-serine phosphorylation"/>
    <property type="evidence" value="ECO:0000314"/>
    <property type="project" value="MGI"/>
</dbReference>
<dbReference type="GO" id="GO:0050731">
    <property type="term" value="P:positive regulation of peptidyl-tyrosine phosphorylation"/>
    <property type="evidence" value="ECO:0000314"/>
    <property type="project" value="MGI"/>
</dbReference>
<dbReference type="GO" id="GO:0051897">
    <property type="term" value="P:positive regulation of phosphatidylinositol 3-kinase/protein kinase B signal transduction"/>
    <property type="evidence" value="ECO:0000316"/>
    <property type="project" value="BHF-UCL"/>
</dbReference>
<dbReference type="GO" id="GO:0045944">
    <property type="term" value="P:positive regulation of transcription by RNA polymerase II"/>
    <property type="evidence" value="ECO:0000314"/>
    <property type="project" value="MGI"/>
</dbReference>
<dbReference type="GO" id="GO:0042531">
    <property type="term" value="P:positive regulation of tyrosine phosphorylation of STAT protein"/>
    <property type="evidence" value="ECO:0000314"/>
    <property type="project" value="CACAO"/>
</dbReference>
<dbReference type="GO" id="GO:1902036">
    <property type="term" value="P:regulation of hematopoietic stem cell differentiation"/>
    <property type="evidence" value="ECO:0000304"/>
    <property type="project" value="GO_Central"/>
</dbReference>
<dbReference type="FunFam" id="1.20.1250.10:FF:000031">
    <property type="entry name" value="Oncostatin M"/>
    <property type="match status" value="1"/>
</dbReference>
<dbReference type="Gene3D" id="1.20.1250.10">
    <property type="match status" value="1"/>
</dbReference>
<dbReference type="InterPro" id="IPR009079">
    <property type="entry name" value="4_helix_cytokine-like_core"/>
</dbReference>
<dbReference type="InterPro" id="IPR001581">
    <property type="entry name" value="Leukemia_IF/oncostatin"/>
</dbReference>
<dbReference type="InterPro" id="IPR019827">
    <property type="entry name" value="Leukemia_IF/oncostatin_CS"/>
</dbReference>
<dbReference type="InterPro" id="IPR039578">
    <property type="entry name" value="OSM"/>
</dbReference>
<dbReference type="PANTHER" id="PTHR14261">
    <property type="entry name" value="ONCOSTATIN M"/>
    <property type="match status" value="1"/>
</dbReference>
<dbReference type="PANTHER" id="PTHR14261:SF0">
    <property type="entry name" value="ONCOSTATIN-M"/>
    <property type="match status" value="1"/>
</dbReference>
<dbReference type="Pfam" id="PF01291">
    <property type="entry name" value="LIF_OSM"/>
    <property type="match status" value="1"/>
</dbReference>
<dbReference type="SMART" id="SM00080">
    <property type="entry name" value="LIF_OSM"/>
    <property type="match status" value="1"/>
</dbReference>
<dbReference type="SUPFAM" id="SSF47266">
    <property type="entry name" value="4-helical cytokines"/>
    <property type="match status" value="1"/>
</dbReference>
<dbReference type="PROSITE" id="PS00590">
    <property type="entry name" value="LIF_OSM"/>
    <property type="match status" value="1"/>
</dbReference>